<gene>
    <name type="primary">sowahb</name>
    <name type="synonym">ankrd56</name>
</gene>
<proteinExistence type="evidence at transcript level"/>
<evidence type="ECO:0000256" key="1">
    <source>
        <dbReference type="SAM" id="MobiDB-lite"/>
    </source>
</evidence>
<evidence type="ECO:0000305" key="2"/>
<organism>
    <name type="scientific">Xenopus laevis</name>
    <name type="common">African clawed frog</name>
    <dbReference type="NCBI Taxonomy" id="8355"/>
    <lineage>
        <taxon>Eukaryota</taxon>
        <taxon>Metazoa</taxon>
        <taxon>Chordata</taxon>
        <taxon>Craniata</taxon>
        <taxon>Vertebrata</taxon>
        <taxon>Euteleostomi</taxon>
        <taxon>Amphibia</taxon>
        <taxon>Batrachia</taxon>
        <taxon>Anura</taxon>
        <taxon>Pipoidea</taxon>
        <taxon>Pipidae</taxon>
        <taxon>Xenopodinae</taxon>
        <taxon>Xenopus</taxon>
        <taxon>Xenopus</taxon>
    </lineage>
</organism>
<accession>Q6NRK3</accession>
<feature type="chain" id="PRO_0000317242" description="Ankyrin repeat domain-containing protein SOWAHB">
    <location>
        <begin position="1"/>
        <end position="813"/>
    </location>
</feature>
<feature type="repeat" description="ANK 1">
    <location>
        <begin position="657"/>
        <end position="686"/>
    </location>
</feature>
<feature type="repeat" description="ANK 2">
    <location>
        <begin position="696"/>
        <end position="726"/>
    </location>
</feature>
<feature type="region of interest" description="Disordered" evidence="1">
    <location>
        <begin position="142"/>
        <end position="256"/>
    </location>
</feature>
<feature type="region of interest" description="Disordered" evidence="1">
    <location>
        <begin position="400"/>
        <end position="436"/>
    </location>
</feature>
<feature type="compositionally biased region" description="Basic and acidic residues" evidence="1">
    <location>
        <begin position="158"/>
        <end position="176"/>
    </location>
</feature>
<feature type="compositionally biased region" description="Pro residues" evidence="1">
    <location>
        <begin position="177"/>
        <end position="189"/>
    </location>
</feature>
<feature type="compositionally biased region" description="Polar residues" evidence="1">
    <location>
        <begin position="191"/>
        <end position="202"/>
    </location>
</feature>
<feature type="compositionally biased region" description="Low complexity" evidence="1">
    <location>
        <begin position="208"/>
        <end position="244"/>
    </location>
</feature>
<feature type="compositionally biased region" description="Polar residues" evidence="1">
    <location>
        <begin position="245"/>
        <end position="256"/>
    </location>
</feature>
<feature type="compositionally biased region" description="Acidic residues" evidence="1">
    <location>
        <begin position="400"/>
        <end position="416"/>
    </location>
</feature>
<protein>
    <recommendedName>
        <fullName>Ankyrin repeat domain-containing protein SOWAHB</fullName>
    </recommendedName>
    <alternativeName>
        <fullName>Ankyrin repeat domain-containing protein 56</fullName>
    </alternativeName>
    <alternativeName>
        <fullName>Protein sosondowah homolog B</fullName>
    </alternativeName>
</protein>
<name>SWAHB_XENLA</name>
<reference key="1">
    <citation type="submission" date="2004-05" db="EMBL/GenBank/DDBJ databases">
        <authorList>
            <consortium name="NIH - Xenopus Gene Collection (XGC) project"/>
        </authorList>
    </citation>
    <scope>NUCLEOTIDE SEQUENCE [LARGE SCALE MRNA]</scope>
    <source>
        <tissue>Oocyte</tissue>
    </source>
</reference>
<dbReference type="EMBL" id="BC070746">
    <property type="protein sequence ID" value="AAH70746.1"/>
    <property type="molecule type" value="mRNA"/>
</dbReference>
<dbReference type="RefSeq" id="NP_001084912.1">
    <property type="nucleotide sequence ID" value="NM_001091443.1"/>
</dbReference>
<dbReference type="SMR" id="Q6NRK3"/>
<dbReference type="DNASU" id="431963"/>
<dbReference type="GeneID" id="431963"/>
<dbReference type="KEGG" id="xla:431963"/>
<dbReference type="AGR" id="Xenbase:XB-GENE-6078381"/>
<dbReference type="CTD" id="431963"/>
<dbReference type="Xenbase" id="XB-GENE-6078381">
    <property type="gene designation" value="sowahb.L"/>
</dbReference>
<dbReference type="OrthoDB" id="60433at2759"/>
<dbReference type="Proteomes" id="UP000186698">
    <property type="component" value="Chromosome 1L"/>
</dbReference>
<dbReference type="Bgee" id="431963">
    <property type="expression patterns" value="Expressed in zone of skin and 10 other cell types or tissues"/>
</dbReference>
<dbReference type="Gene3D" id="1.25.40.20">
    <property type="entry name" value="Ankyrin repeat-containing domain"/>
    <property type="match status" value="1"/>
</dbReference>
<dbReference type="InterPro" id="IPR002110">
    <property type="entry name" value="Ankyrin_rpt"/>
</dbReference>
<dbReference type="InterPro" id="IPR036770">
    <property type="entry name" value="Ankyrin_rpt-contain_sf"/>
</dbReference>
<dbReference type="PANTHER" id="PTHR14491:SF3">
    <property type="entry name" value="ANKYRIN REPEAT DOMAIN-CONTAINING PROTEIN SOWAHB"/>
    <property type="match status" value="1"/>
</dbReference>
<dbReference type="PANTHER" id="PTHR14491">
    <property type="entry name" value="SOSONDOWAH, ISOFORM G"/>
    <property type="match status" value="1"/>
</dbReference>
<dbReference type="Pfam" id="PF12796">
    <property type="entry name" value="Ank_2"/>
    <property type="match status" value="1"/>
</dbReference>
<dbReference type="SMART" id="SM00248">
    <property type="entry name" value="ANK"/>
    <property type="match status" value="2"/>
</dbReference>
<dbReference type="SUPFAM" id="SSF48403">
    <property type="entry name" value="Ankyrin repeat"/>
    <property type="match status" value="1"/>
</dbReference>
<dbReference type="PROSITE" id="PS50297">
    <property type="entry name" value="ANK_REP_REGION"/>
    <property type="match status" value="1"/>
</dbReference>
<dbReference type="PROSITE" id="PS50088">
    <property type="entry name" value="ANK_REPEAT"/>
    <property type="match status" value="1"/>
</dbReference>
<comment type="similarity">
    <text evidence="2">Belongs to the SOWAH family.</text>
</comment>
<sequence>MAKELSQEEVLDFLCQSGGKVANASLLVHFKRFLRDPQAADAVLLKRRDKFKRYINSVAVVRQEGSVKYVVLRNRYQDLLGEDIEPAAAEDAGSEGERDQVVLPTEHGQDYLAHTFGQERLKQANGGDVICDCSEARAVVPSAAPHSHSQSWDVGESMSEKARVNPSHWDTKRYYPEDPPVPDSLPVSPPCTNTRQSSFTSTSRPHNHSLSSNNLSSSFSSPESPGLVAKPYNASPSPAGSSPNIREQTPKSQSLSKAANAAFVSVTCTDIKEQREGCTELLAPQPCQNWDYSQPEQLHSAQEHHSDLHREHMTNGFHSPDPLSSKYPHLTSPCTPLQLSPETDTTPDVPLAHNLAAVSYPSPPLPGNNMYGMWMCQIPVFKSIRCQLSLQDLDDFVDQETCGSEESDSGEGGDCDTEPRDNDDADDDTFSSDSHKEIPKLCVEQESEYLHKCHSNIDYSGKNDLYNSLLEEDRIGVKDTLVEHGDVASMRIDTSKSVYTAKSFLTDQAPILFELVRNAPPNKTSSCFQGALSSSDEELLDRDYRKRRRSSRYKKSANVSVPCVQPDTDRLLTAKCVSSSSFLINNNLQEQSTQAQFLPKYNSNFGLKKSASQKSSVVPLDPKEHDWIVKTAAGLWIQVYGMFSMDPHLALHKDFITGYTALHWFAKHGCIDLFNKVVIGAKKAGIELDMNVKSSNGYTPLHIAAIHGHHKVAIMLVEKLKVNVKVRDNSGKRAWQYLNSATSGDVWQLLGAPKGKTIFASCALHTAQNLNIRNKTSSQLARKSSLAAFRKTQHQRRKANNQSFLREREIYSD</sequence>
<keyword id="KW-0040">ANK repeat</keyword>
<keyword id="KW-1185">Reference proteome</keyword>
<keyword id="KW-0677">Repeat</keyword>